<accession>P03085</accession>
<reference key="1">
    <citation type="journal article" date="1979" name="Cell">
        <title>The genome of human papovavirus BKV.</title>
        <authorList>
            <person name="Seif I."/>
            <person name="Khoury G."/>
            <person name="Dhar R."/>
        </authorList>
    </citation>
    <scope>NUCLEOTIDE SEQUENCE [GENOMIC DNA]</scope>
    <source>
        <strain>Dunlop</strain>
    </source>
</reference>
<reference key="2">
    <citation type="journal article" date="1979" name="Science">
        <title>BK virus DNA: complete nucleotide sequence of a human tumor virus.</title>
        <authorList>
            <person name="Yang R.C.A."/>
            <person name="Wu R."/>
        </authorList>
    </citation>
    <scope>NUCLEOTIDE SEQUENCE [GENOMIC DNA]</scope>
    <source>
        <strain>MM</strain>
    </source>
</reference>
<reference key="3">
    <citation type="journal article" date="1979" name="Nucleic Acids Res.">
        <title>Comparative study of papovavirus DNA: BKV(MM), BKV(WT) and SV40.</title>
        <authorList>
            <person name="Yang R.C.A."/>
            <person name="Wu R."/>
        </authorList>
    </citation>
    <scope>NUCLEOTIDE SEQUENCE [GENOMIC DNA] OF 1-10</scope>
    <source>
        <strain>MM</strain>
    </source>
</reference>
<reference key="4">
    <citation type="journal article" date="1981" name="Nature">
        <title>Identification of the SV40 agnogene product: a DNA binding protein.</title>
        <authorList>
            <person name="Jay G."/>
            <person name="Nomura S."/>
            <person name="Anderson C.W."/>
            <person name="Khoury G."/>
        </authorList>
    </citation>
    <scope>IDENTIFICATION OF PROTEIN</scope>
</reference>
<evidence type="ECO:0000250" key="1"/>
<evidence type="ECO:0000255" key="2"/>
<evidence type="ECO:0000305" key="3"/>
<comment type="function">
    <text evidence="1">Alters the structure of the nuclear envelope by interacting with host CBX5 and disrupting CBX5 association with LBR. Involved in the perinuclear-nuclear localization of the capsid protein VP1 during virion assembly and maturation. Plays an important role in the release of progeny virions from infected cells and in viral propagation, probably by acting as a viral ionic channel in the host plasma membrane. Allows influx of extracellular calcium ions in the host cell. May contribute to viral genome transcription and translation of viral late proteins (By similarity).</text>
</comment>
<comment type="subunit">
    <text evidence="1">Homooligomer. Interacts with VP1 (By similarity). Interacts with large T antigen; this interaction may impact upon the activity of T-antigen on the control of viral gene transcription and replication. Interacts with small t antigen. Interacts with host CBX5; this interaction induces the dissociation of CBX5 from LBR, resulting in destabilization of the nuclear envelope (By similarity).</text>
</comment>
<comment type="subcellular location">
    <subcellularLocation>
        <location evidence="3">Host cytoplasm</location>
    </subcellularLocation>
    <subcellularLocation>
        <location evidence="3">Host nucleus membrane</location>
        <topology evidence="3">Single-pass type II membrane protein</topology>
    </subcellularLocation>
    <subcellularLocation>
        <location evidence="3">Host rough endoplasmic reticulum membrane</location>
        <topology evidence="3">Single-pass type II membrane protein</topology>
    </subcellularLocation>
    <subcellularLocation>
        <location evidence="3">Host cell membrane</location>
        <topology evidence="3">Single-pass type II membrane protein</topology>
    </subcellularLocation>
    <text evidence="1">Mostly perinuclear.</text>
</comment>
<comment type="alternative products">
    <event type="alternative splicing"/>
    <event type="alternative initiation"/>
    <isoform>
        <id>P03085-1</id>
        <name>Agno</name>
        <sequence type="displayed"/>
    </isoform>
    <isoform>
        <id>P03088-1</id>
        <name>VP1</name>
        <name>Major capsid protein VP1</name>
        <sequence type="external"/>
    </isoform>
    <isoform>
        <id>P03094-1</id>
        <name>VP2</name>
        <name>Minor capsid protein VP2</name>
        <sequence type="external"/>
    </isoform>
    <isoform>
        <id>P03094-2</id>
        <name>VP3</name>
        <name>Minor capsid protein VP3</name>
        <sequence type="external"/>
    </isoform>
    <isoform>
        <id>P03094-3</id>
        <name>VP4</name>
        <name>Viroporin VP4</name>
        <sequence type="external"/>
    </isoform>
</comment>
<comment type="PTM">
    <text>Phosphorylated by host PKC. Phosphorylation alters the stability and may also have an impact on the subcellular location.</text>
</comment>
<comment type="miscellaneous">
    <molecule>Isoform Agno</molecule>
    <text>Produced by alternative initiation of the late mRNA.</text>
</comment>
<comment type="similarity">
    <text evidence="3">Belongs to the polyomavirus agnoprotein family.</text>
</comment>
<dbReference type="EMBL" id="V01108">
    <property type="protein sequence ID" value="CAA24296.1"/>
    <property type="molecule type" value="Genomic_DNA"/>
</dbReference>
<dbReference type="EMBL" id="V01109">
    <property type="protein sequence ID" value="CAA24304.1"/>
    <property type="molecule type" value="Genomic_DNA"/>
</dbReference>
<dbReference type="EMBL" id="M57959">
    <property type="protein sequence ID" value="AAA47146.2"/>
    <property type="molecule type" value="Genomic_DNA"/>
</dbReference>
<dbReference type="EMBL" id="D00678">
    <property type="protein sequence ID" value="BAA00584.1"/>
    <property type="molecule type" value="Genomic_DNA"/>
</dbReference>
<dbReference type="PIR" id="B03632">
    <property type="entry name" value="DNVPB"/>
</dbReference>
<dbReference type="RefSeq" id="YP_717936.1">
    <molecule id="P03085-1"/>
    <property type="nucleotide sequence ID" value="NC_001538.1"/>
</dbReference>
<dbReference type="SMR" id="P03085"/>
<dbReference type="DNASU" id="29031013"/>
<dbReference type="GeneID" id="29031013"/>
<dbReference type="KEGG" id="vg:29031013"/>
<dbReference type="Proteomes" id="UP000008475">
    <property type="component" value="Genome"/>
</dbReference>
<dbReference type="Proteomes" id="UP000008990">
    <property type="component" value="Genome"/>
</dbReference>
<dbReference type="GO" id="GO:0044200">
    <property type="term" value="C:host cell nuclear membrane"/>
    <property type="evidence" value="ECO:0007669"/>
    <property type="project" value="UniProtKB-SubCell"/>
</dbReference>
<dbReference type="GO" id="GO:0020002">
    <property type="term" value="C:host cell plasma membrane"/>
    <property type="evidence" value="ECO:0007669"/>
    <property type="project" value="UniProtKB-SubCell"/>
</dbReference>
<dbReference type="GO" id="GO:0044169">
    <property type="term" value="C:host cell rough endoplasmic reticulum membrane"/>
    <property type="evidence" value="ECO:0007669"/>
    <property type="project" value="UniProtKB-SubCell"/>
</dbReference>
<dbReference type="GO" id="GO:0016020">
    <property type="term" value="C:membrane"/>
    <property type="evidence" value="ECO:0007669"/>
    <property type="project" value="UniProtKB-KW"/>
</dbReference>
<dbReference type="GO" id="GO:0015267">
    <property type="term" value="F:channel activity"/>
    <property type="evidence" value="ECO:0007669"/>
    <property type="project" value="UniProtKB-KW"/>
</dbReference>
<dbReference type="GO" id="GO:0003677">
    <property type="term" value="F:DNA binding"/>
    <property type="evidence" value="ECO:0007669"/>
    <property type="project" value="InterPro"/>
</dbReference>
<dbReference type="GO" id="GO:0034220">
    <property type="term" value="P:monoatomic ion transmembrane transport"/>
    <property type="evidence" value="ECO:0007669"/>
    <property type="project" value="UniProtKB-KW"/>
</dbReference>
<dbReference type="InterPro" id="IPR002643">
    <property type="entry name" value="Polyoma_agno"/>
</dbReference>
<dbReference type="Pfam" id="PF01736">
    <property type="entry name" value="Polyoma_agno"/>
    <property type="match status" value="1"/>
</dbReference>
<organismHost>
    <name type="scientific">Homo sapiens</name>
    <name type="common">Human</name>
    <dbReference type="NCBI Taxonomy" id="9606"/>
</organismHost>
<protein>
    <recommendedName>
        <fullName>Agnoprotein</fullName>
    </recommendedName>
    <alternativeName>
        <fullName>Agno</fullName>
    </alternativeName>
</protein>
<organism>
    <name type="scientific">BK polyomavirus</name>
    <name type="common">BKPyV</name>
    <name type="synonym">Human polyomavirus 1</name>
    <dbReference type="NCBI Taxonomy" id="1891762"/>
    <lineage>
        <taxon>Viruses</taxon>
        <taxon>Monodnaviria</taxon>
        <taxon>Shotokuvirae</taxon>
        <taxon>Cossaviricota</taxon>
        <taxon>Papovaviricetes</taxon>
        <taxon>Sepolyvirales</taxon>
        <taxon>Polyomaviridae</taxon>
        <taxon>Betapolyomavirus</taxon>
    </lineage>
</organism>
<name>AGNO_POVBK</name>
<proteinExistence type="inferred from homology"/>
<sequence>MVLRQLSRQASVKVGKTWTGTKKRAQRIFIFILELLLEFCRGEDSVDGKNKSTTALPAVKDSVKDS</sequence>
<keyword id="KW-0024">Alternative initiation</keyword>
<keyword id="KW-0025">Alternative splicing</keyword>
<keyword id="KW-1032">Host cell membrane</keyword>
<keyword id="KW-1035">Host cytoplasm</keyword>
<keyword id="KW-1038">Host endoplasmic reticulum</keyword>
<keyword id="KW-1043">Host membrane</keyword>
<keyword id="KW-1048">Host nucleus</keyword>
<keyword id="KW-0945">Host-virus interaction</keyword>
<keyword id="KW-0407">Ion channel</keyword>
<keyword id="KW-0406">Ion transport</keyword>
<keyword id="KW-0472">Membrane</keyword>
<keyword id="KW-0597">Phosphoprotein</keyword>
<keyword id="KW-0735">Signal-anchor</keyword>
<keyword id="KW-0812">Transmembrane</keyword>
<keyword id="KW-1133">Transmembrane helix</keyword>
<keyword id="KW-0813">Transport</keyword>
<keyword id="KW-1182">Viral ion channel</keyword>
<feature type="chain" id="PRO_0000115031" description="Agnoprotein">
    <location>
        <begin position="1"/>
        <end position="66"/>
    </location>
</feature>
<feature type="topological domain" description="Cytoplasmic" evidence="2">
    <location>
        <begin position="1"/>
        <end position="27"/>
    </location>
</feature>
<feature type="transmembrane region" description="Helical; Signal-anchor for type II membrane protein" evidence="2">
    <location>
        <begin position="28"/>
        <end position="44"/>
    </location>
</feature>
<feature type="topological domain" description="Extracellular" evidence="2">
    <location>
        <begin position="45"/>
        <end position="66"/>
    </location>
</feature>
<feature type="modified residue" description="Phosphoserine; by host" evidence="1">
    <location>
        <position position="7"/>
    </location>
</feature>
<feature type="modified residue" description="Phosphoserine; by host" evidence="1">
    <location>
        <position position="11"/>
    </location>
</feature>
<feature type="modified residue" description="Phosphothreonine; by host" evidence="1">
    <location>
        <position position="21"/>
    </location>
</feature>